<keyword id="KW-0025">Alternative splicing</keyword>
<keyword id="KW-1015">Disulfide bond</keyword>
<keyword id="KW-0325">Glycoprotein</keyword>
<keyword id="KW-0372">Hormone</keyword>
<keyword id="KW-1185">Reference proteome</keyword>
<keyword id="KW-0964">Secreted</keyword>
<keyword id="KW-0732">Signal</keyword>
<evidence type="ECO:0000250" key="1"/>
<evidence type="ECO:0000255" key="2"/>
<evidence type="ECO:0000303" key="3">
    <source ref="2"/>
</evidence>
<evidence type="ECO:0000305" key="4"/>
<gene>
    <name type="primary">Prl8a8</name>
    <name type="synonym">Prlpc3</name>
</gene>
<name>PR8A8_MOUSE</name>
<protein>
    <recommendedName>
        <fullName>Prolactin-8A8</fullName>
    </recommendedName>
    <alternativeName>
        <fullName>Placental prolactin-like protein C3</fullName>
        <shortName>PLP-C3</shortName>
        <shortName>PRL-like protein C3</shortName>
    </alternativeName>
    <alternativeName>
        <fullName>Prolactin-like protein C-gamma</fullName>
        <shortName>PLP C-gamma</shortName>
    </alternativeName>
</protein>
<accession>Q9DAS4</accession>
<accession>Q8VHE8</accession>
<proteinExistence type="evidence at transcript level"/>
<sequence length="241" mass="28089">MELQFRQPHFSDALLLLLLSNLLLWEKASSIPACMAEKSGCWNPRMETFDSAIRKAETLRTVSKQFYVELYHNQFSSGKFATLTSKLVRRDEIVFRAASHCHSTLTNPPNKGIQYITIEIPEYLKTLINYVGAWISPLFHLVIELSAMKDVPETILSKAKEIEENNRQILRDLRWIITEVYPTSKKKEIFPSWELLSFLKSSSRNSKFLAMFNLSHCLEYDTQFFLFHLRILKCRITGKDC</sequence>
<reference key="1">
    <citation type="journal article" date="2003" name="Endocrinology">
        <title>The mouse prolactin gene family locus.</title>
        <authorList>
            <person name="Wiemers D.O."/>
            <person name="Shao L.-J."/>
            <person name="Ain R."/>
            <person name="Dai G."/>
            <person name="Soares M.J."/>
        </authorList>
    </citation>
    <scope>NUCLEOTIDE SEQUENCE [MRNA]</scope>
    <scope>TISSUE SPECIFICITY (ISOFORM 2)</scope>
    <source>
        <strain>CD-1</strain>
        <tissue>Placenta</tissue>
    </source>
</reference>
<reference key="2">
    <citation type="submission" date="2000-02" db="EMBL/GenBank/DDBJ databases">
        <title>Molecular cloning and characterization of a newly identified member of the mouse placental prolactin-like protein C subfamily.</title>
        <authorList>
            <person name="Hwang I.-T."/>
            <person name="Lee Y.-H."/>
            <person name="Chun J.-Y."/>
        </authorList>
    </citation>
    <scope>NUCLEOTIDE SEQUENCE [MRNA] (ISOFORMS 1 AND 2)</scope>
    <source>
        <strain>ICR</strain>
        <tissue>Placenta</tissue>
    </source>
</reference>
<reference key="3">
    <citation type="journal article" date="2005" name="Science">
        <title>The transcriptional landscape of the mammalian genome.</title>
        <authorList>
            <person name="Carninci P."/>
            <person name="Kasukawa T."/>
            <person name="Katayama S."/>
            <person name="Gough J."/>
            <person name="Frith M.C."/>
            <person name="Maeda N."/>
            <person name="Oyama R."/>
            <person name="Ravasi T."/>
            <person name="Lenhard B."/>
            <person name="Wells C."/>
            <person name="Kodzius R."/>
            <person name="Shimokawa K."/>
            <person name="Bajic V.B."/>
            <person name="Brenner S.E."/>
            <person name="Batalov S."/>
            <person name="Forrest A.R."/>
            <person name="Zavolan M."/>
            <person name="Davis M.J."/>
            <person name="Wilming L.G."/>
            <person name="Aidinis V."/>
            <person name="Allen J.E."/>
            <person name="Ambesi-Impiombato A."/>
            <person name="Apweiler R."/>
            <person name="Aturaliya R.N."/>
            <person name="Bailey T.L."/>
            <person name="Bansal M."/>
            <person name="Baxter L."/>
            <person name="Beisel K.W."/>
            <person name="Bersano T."/>
            <person name="Bono H."/>
            <person name="Chalk A.M."/>
            <person name="Chiu K.P."/>
            <person name="Choudhary V."/>
            <person name="Christoffels A."/>
            <person name="Clutterbuck D.R."/>
            <person name="Crowe M.L."/>
            <person name="Dalla E."/>
            <person name="Dalrymple B.P."/>
            <person name="de Bono B."/>
            <person name="Della Gatta G."/>
            <person name="di Bernardo D."/>
            <person name="Down T."/>
            <person name="Engstrom P."/>
            <person name="Fagiolini M."/>
            <person name="Faulkner G."/>
            <person name="Fletcher C.F."/>
            <person name="Fukushima T."/>
            <person name="Furuno M."/>
            <person name="Futaki S."/>
            <person name="Gariboldi M."/>
            <person name="Georgii-Hemming P."/>
            <person name="Gingeras T.R."/>
            <person name="Gojobori T."/>
            <person name="Green R.E."/>
            <person name="Gustincich S."/>
            <person name="Harbers M."/>
            <person name="Hayashi Y."/>
            <person name="Hensch T.K."/>
            <person name="Hirokawa N."/>
            <person name="Hill D."/>
            <person name="Huminiecki L."/>
            <person name="Iacono M."/>
            <person name="Ikeo K."/>
            <person name="Iwama A."/>
            <person name="Ishikawa T."/>
            <person name="Jakt M."/>
            <person name="Kanapin A."/>
            <person name="Katoh M."/>
            <person name="Kawasawa Y."/>
            <person name="Kelso J."/>
            <person name="Kitamura H."/>
            <person name="Kitano H."/>
            <person name="Kollias G."/>
            <person name="Krishnan S.P."/>
            <person name="Kruger A."/>
            <person name="Kummerfeld S.K."/>
            <person name="Kurochkin I.V."/>
            <person name="Lareau L.F."/>
            <person name="Lazarevic D."/>
            <person name="Lipovich L."/>
            <person name="Liu J."/>
            <person name="Liuni S."/>
            <person name="McWilliam S."/>
            <person name="Madan Babu M."/>
            <person name="Madera M."/>
            <person name="Marchionni L."/>
            <person name="Matsuda H."/>
            <person name="Matsuzawa S."/>
            <person name="Miki H."/>
            <person name="Mignone F."/>
            <person name="Miyake S."/>
            <person name="Morris K."/>
            <person name="Mottagui-Tabar S."/>
            <person name="Mulder N."/>
            <person name="Nakano N."/>
            <person name="Nakauchi H."/>
            <person name="Ng P."/>
            <person name="Nilsson R."/>
            <person name="Nishiguchi S."/>
            <person name="Nishikawa S."/>
            <person name="Nori F."/>
            <person name="Ohara O."/>
            <person name="Okazaki Y."/>
            <person name="Orlando V."/>
            <person name="Pang K.C."/>
            <person name="Pavan W.J."/>
            <person name="Pavesi G."/>
            <person name="Pesole G."/>
            <person name="Petrovsky N."/>
            <person name="Piazza S."/>
            <person name="Reed J."/>
            <person name="Reid J.F."/>
            <person name="Ring B.Z."/>
            <person name="Ringwald M."/>
            <person name="Rost B."/>
            <person name="Ruan Y."/>
            <person name="Salzberg S.L."/>
            <person name="Sandelin A."/>
            <person name="Schneider C."/>
            <person name="Schoenbach C."/>
            <person name="Sekiguchi K."/>
            <person name="Semple C.A."/>
            <person name="Seno S."/>
            <person name="Sessa L."/>
            <person name="Sheng Y."/>
            <person name="Shibata Y."/>
            <person name="Shimada H."/>
            <person name="Shimada K."/>
            <person name="Silva D."/>
            <person name="Sinclair B."/>
            <person name="Sperling S."/>
            <person name="Stupka E."/>
            <person name="Sugiura K."/>
            <person name="Sultana R."/>
            <person name="Takenaka Y."/>
            <person name="Taki K."/>
            <person name="Tammoja K."/>
            <person name="Tan S.L."/>
            <person name="Tang S."/>
            <person name="Taylor M.S."/>
            <person name="Tegner J."/>
            <person name="Teichmann S.A."/>
            <person name="Ueda H.R."/>
            <person name="van Nimwegen E."/>
            <person name="Verardo R."/>
            <person name="Wei C.L."/>
            <person name="Yagi K."/>
            <person name="Yamanishi H."/>
            <person name="Zabarovsky E."/>
            <person name="Zhu S."/>
            <person name="Zimmer A."/>
            <person name="Hide W."/>
            <person name="Bult C."/>
            <person name="Grimmond S.M."/>
            <person name="Teasdale R.D."/>
            <person name="Liu E.T."/>
            <person name="Brusic V."/>
            <person name="Quackenbush J."/>
            <person name="Wahlestedt C."/>
            <person name="Mattick J.S."/>
            <person name="Hume D.A."/>
            <person name="Kai C."/>
            <person name="Sasaki D."/>
            <person name="Tomaru Y."/>
            <person name="Fukuda S."/>
            <person name="Kanamori-Katayama M."/>
            <person name="Suzuki M."/>
            <person name="Aoki J."/>
            <person name="Arakawa T."/>
            <person name="Iida J."/>
            <person name="Imamura K."/>
            <person name="Itoh M."/>
            <person name="Kato T."/>
            <person name="Kawaji H."/>
            <person name="Kawagashira N."/>
            <person name="Kawashima T."/>
            <person name="Kojima M."/>
            <person name="Kondo S."/>
            <person name="Konno H."/>
            <person name="Nakano K."/>
            <person name="Ninomiya N."/>
            <person name="Nishio T."/>
            <person name="Okada M."/>
            <person name="Plessy C."/>
            <person name="Shibata K."/>
            <person name="Shiraki T."/>
            <person name="Suzuki S."/>
            <person name="Tagami M."/>
            <person name="Waki K."/>
            <person name="Watahiki A."/>
            <person name="Okamura-Oho Y."/>
            <person name="Suzuki H."/>
            <person name="Kawai J."/>
            <person name="Hayashizaki Y."/>
        </authorList>
    </citation>
    <scope>NUCLEOTIDE SEQUENCE [LARGE SCALE MRNA] (ISOFORM 1)</scope>
    <source>
        <strain>C57BL/6J</strain>
        <tissue>Placenta</tissue>
    </source>
</reference>
<reference key="4">
    <citation type="journal article" date="2009" name="PLoS Biol.">
        <title>Lineage-specific biology revealed by a finished genome assembly of the mouse.</title>
        <authorList>
            <person name="Church D.M."/>
            <person name="Goodstadt L."/>
            <person name="Hillier L.W."/>
            <person name="Zody M.C."/>
            <person name="Goldstein S."/>
            <person name="She X."/>
            <person name="Bult C.J."/>
            <person name="Agarwala R."/>
            <person name="Cherry J.L."/>
            <person name="DiCuccio M."/>
            <person name="Hlavina W."/>
            <person name="Kapustin Y."/>
            <person name="Meric P."/>
            <person name="Maglott D."/>
            <person name="Birtle Z."/>
            <person name="Marques A.C."/>
            <person name="Graves T."/>
            <person name="Zhou S."/>
            <person name="Teague B."/>
            <person name="Potamousis K."/>
            <person name="Churas C."/>
            <person name="Place M."/>
            <person name="Herschleb J."/>
            <person name="Runnheim R."/>
            <person name="Forrest D."/>
            <person name="Amos-Landgraf J."/>
            <person name="Schwartz D.C."/>
            <person name="Cheng Z."/>
            <person name="Lindblad-Toh K."/>
            <person name="Eichler E.E."/>
            <person name="Ponting C.P."/>
        </authorList>
    </citation>
    <scope>NUCLEOTIDE SEQUENCE [LARGE SCALE GENOMIC DNA]</scope>
    <source>
        <strain>C57BL/6J</strain>
    </source>
</reference>
<reference key="5">
    <citation type="journal article" date="2004" name="Genome Res.">
        <title>The status, quality, and expansion of the NIH full-length cDNA project: the Mammalian Gene Collection (MGC).</title>
        <authorList>
            <consortium name="The MGC Project Team"/>
        </authorList>
    </citation>
    <scope>NUCLEOTIDE SEQUENCE [LARGE SCALE MRNA] (ISOFORM 1)</scope>
    <source>
        <tissue>Placenta</tissue>
    </source>
</reference>
<organism>
    <name type="scientific">Mus musculus</name>
    <name type="common">Mouse</name>
    <dbReference type="NCBI Taxonomy" id="10090"/>
    <lineage>
        <taxon>Eukaryota</taxon>
        <taxon>Metazoa</taxon>
        <taxon>Chordata</taxon>
        <taxon>Craniata</taxon>
        <taxon>Vertebrata</taxon>
        <taxon>Euteleostomi</taxon>
        <taxon>Mammalia</taxon>
        <taxon>Eutheria</taxon>
        <taxon>Euarchontoglires</taxon>
        <taxon>Glires</taxon>
        <taxon>Rodentia</taxon>
        <taxon>Myomorpha</taxon>
        <taxon>Muroidea</taxon>
        <taxon>Muridae</taxon>
        <taxon>Murinae</taxon>
        <taxon>Mus</taxon>
        <taxon>Mus</taxon>
    </lineage>
</organism>
<comment type="subcellular location">
    <subcellularLocation>
        <location evidence="1">Secreted</location>
    </subcellularLocation>
</comment>
<comment type="alternative products">
    <event type="alternative splicing"/>
    <isoform>
        <id>Q9DAS4-1</id>
        <name>1</name>
        <sequence type="displayed"/>
    </isoform>
    <isoform>
        <id>Q9DAS4-2</id>
        <name>2</name>
        <sequence type="described" ref="VSP_016781"/>
    </isoform>
</comment>
<comment type="tissue specificity">
    <text>Expressed specifically in the placenta. Predominantly expressed in spongiotrophoblast cells.</text>
</comment>
<comment type="developmental stage">
    <text>Increases in abundance as gestation advanced. Predominandtly expressed in the junctional zone during the latter third of gestation.</text>
</comment>
<comment type="similarity">
    <text evidence="4">Belongs to the somatotropin/prolactin family.</text>
</comment>
<feature type="signal peptide" evidence="2">
    <location>
        <begin position="1"/>
        <end position="30"/>
    </location>
</feature>
<feature type="chain" id="PRO_0000045332" description="Prolactin-8A8">
    <location>
        <begin position="31"/>
        <end position="241"/>
    </location>
</feature>
<feature type="glycosylation site" description="N-linked (GlcNAc...) asparagine" evidence="2">
    <location>
        <position position="213"/>
    </location>
</feature>
<feature type="disulfide bond" evidence="2">
    <location>
        <begin position="34"/>
        <end position="41"/>
    </location>
</feature>
<feature type="disulfide bond" evidence="1">
    <location>
        <begin position="101"/>
        <end position="217"/>
    </location>
</feature>
<feature type="disulfide bond" evidence="1">
    <location>
        <begin position="234"/>
        <end position="241"/>
    </location>
</feature>
<feature type="splice variant" id="VSP_016781" description="In isoform 2." evidence="3">
    <original>SD</original>
    <variation>Y</variation>
    <location>
        <begin position="11"/>
        <end position="12"/>
    </location>
</feature>
<dbReference type="EMBL" id="AF466150">
    <property type="protein sequence ID" value="AAL73987.1"/>
    <property type="molecule type" value="mRNA"/>
</dbReference>
<dbReference type="EMBL" id="AF230921">
    <property type="protein sequence ID" value="AAN76491.1"/>
    <property type="molecule type" value="mRNA"/>
</dbReference>
<dbReference type="EMBL" id="AF230922">
    <property type="protein sequence ID" value="AAN76492.1"/>
    <property type="molecule type" value="mRNA"/>
</dbReference>
<dbReference type="EMBL" id="AK005568">
    <property type="protein sequence ID" value="BAB24128.1"/>
    <property type="molecule type" value="mRNA"/>
</dbReference>
<dbReference type="EMBL" id="AK167369">
    <property type="protein sequence ID" value="BAE39465.1"/>
    <property type="molecule type" value="mRNA"/>
</dbReference>
<dbReference type="EMBL" id="AL590522">
    <property type="protein sequence ID" value="CAI23980.1"/>
    <property type="molecule type" value="Genomic_DNA"/>
</dbReference>
<dbReference type="EMBL" id="BC100326">
    <property type="protein sequence ID" value="AAI00327.1"/>
    <property type="molecule type" value="mRNA"/>
</dbReference>
<dbReference type="CCDS" id="CCDS26399.1">
    <molecule id="Q9DAS4-2"/>
</dbReference>
<dbReference type="CCDS" id="CCDS79173.1">
    <molecule id="Q9DAS4-1"/>
</dbReference>
<dbReference type="RefSeq" id="NP_001298054.1">
    <molecule id="Q9DAS4-1"/>
    <property type="nucleotide sequence ID" value="NM_001311125.1"/>
</dbReference>
<dbReference type="RefSeq" id="NP_076230.1">
    <molecule id="Q9DAS4-2"/>
    <property type="nucleotide sequence ID" value="NM_023741.3"/>
</dbReference>
<dbReference type="SMR" id="Q9DAS4"/>
<dbReference type="FunCoup" id="Q9DAS4">
    <property type="interactions" value="522"/>
</dbReference>
<dbReference type="STRING" id="10090.ENSMUSP00000105979"/>
<dbReference type="GlyCosmos" id="Q9DAS4">
    <property type="glycosylation" value="1 site, No reported glycans"/>
</dbReference>
<dbReference type="GlyGen" id="Q9DAS4">
    <property type="glycosylation" value="1 site"/>
</dbReference>
<dbReference type="PaxDb" id="10090-ENSMUSP00000105979"/>
<dbReference type="TopDownProteomics" id="Q9DAS4-1">
    <molecule id="Q9DAS4-1"/>
</dbReference>
<dbReference type="DNASU" id="74188"/>
<dbReference type="Ensembl" id="ENSMUST00000018389.5">
    <molecule id="Q9DAS4-2"/>
    <property type="protein sequence ID" value="ENSMUSP00000018389.4"/>
    <property type="gene ID" value="ENSMUSG00000021346.15"/>
</dbReference>
<dbReference type="Ensembl" id="ENSMUST00000110350.9">
    <molecule id="Q9DAS4-1"/>
    <property type="protein sequence ID" value="ENSMUSP00000105979.2"/>
    <property type="gene ID" value="ENSMUSG00000021346.15"/>
</dbReference>
<dbReference type="GeneID" id="74188"/>
<dbReference type="KEGG" id="mmu:74188"/>
<dbReference type="UCSC" id="uc007pxr.1">
    <molecule id="Q9DAS4-2"/>
    <property type="organism name" value="mouse"/>
</dbReference>
<dbReference type="UCSC" id="uc007pxt.1">
    <molecule id="Q9DAS4-1"/>
    <property type="organism name" value="mouse"/>
</dbReference>
<dbReference type="AGR" id="MGI:1921438"/>
<dbReference type="CTD" id="74188"/>
<dbReference type="MGI" id="MGI:1921438">
    <property type="gene designation" value="Prl8a8"/>
</dbReference>
<dbReference type="VEuPathDB" id="HostDB:ENSMUSG00000021346"/>
<dbReference type="eggNOG" id="ENOG502QYU3">
    <property type="taxonomic scope" value="Eukaryota"/>
</dbReference>
<dbReference type="GeneTree" id="ENSGT00950000182818"/>
<dbReference type="HOGENOM" id="CLU_088274_0_0_1"/>
<dbReference type="InParanoid" id="Q9DAS4"/>
<dbReference type="OMA" id="QPHFYAL"/>
<dbReference type="OrthoDB" id="9604840at2759"/>
<dbReference type="PhylomeDB" id="Q9DAS4"/>
<dbReference type="TreeFam" id="TF332592"/>
<dbReference type="BioGRID-ORCS" id="74188">
    <property type="hits" value="0 hits in 77 CRISPR screens"/>
</dbReference>
<dbReference type="ChiTaRS" id="Prl8a8">
    <property type="organism name" value="mouse"/>
</dbReference>
<dbReference type="PRO" id="PR:Q9DAS4"/>
<dbReference type="Proteomes" id="UP000000589">
    <property type="component" value="Chromosome 13"/>
</dbReference>
<dbReference type="RNAct" id="Q9DAS4">
    <property type="molecule type" value="protein"/>
</dbReference>
<dbReference type="Bgee" id="ENSMUSG00000021346">
    <property type="expression patterns" value="Expressed in placenta labyrinth and 9 other cell types or tissues"/>
</dbReference>
<dbReference type="ExpressionAtlas" id="Q9DAS4">
    <property type="expression patterns" value="baseline and differential"/>
</dbReference>
<dbReference type="GO" id="GO:0005576">
    <property type="term" value="C:extracellular region"/>
    <property type="evidence" value="ECO:0007669"/>
    <property type="project" value="UniProtKB-SubCell"/>
</dbReference>
<dbReference type="GO" id="GO:0005179">
    <property type="term" value="F:hormone activity"/>
    <property type="evidence" value="ECO:0007669"/>
    <property type="project" value="UniProtKB-KW"/>
</dbReference>
<dbReference type="CDD" id="cd10288">
    <property type="entry name" value="prolactin_like"/>
    <property type="match status" value="1"/>
</dbReference>
<dbReference type="FunFam" id="1.20.1250.10:FF:000036">
    <property type="entry name" value="Growth hormone d15"/>
    <property type="match status" value="1"/>
</dbReference>
<dbReference type="Gene3D" id="1.20.1250.10">
    <property type="match status" value="1"/>
</dbReference>
<dbReference type="InterPro" id="IPR009079">
    <property type="entry name" value="4_helix_cytokine-like_core"/>
</dbReference>
<dbReference type="InterPro" id="IPR001400">
    <property type="entry name" value="Somatotropin/Prolactin"/>
</dbReference>
<dbReference type="PANTHER" id="PTHR11417:SF69">
    <property type="entry name" value="PROLACTIN-8A6-RELATED"/>
    <property type="match status" value="1"/>
</dbReference>
<dbReference type="PANTHER" id="PTHR11417">
    <property type="entry name" value="SOMATOTROPIN,PROLACTIN"/>
    <property type="match status" value="1"/>
</dbReference>
<dbReference type="Pfam" id="PF00103">
    <property type="entry name" value="Hormone_1"/>
    <property type="match status" value="1"/>
</dbReference>
<dbReference type="SUPFAM" id="SSF47266">
    <property type="entry name" value="4-helical cytokines"/>
    <property type="match status" value="1"/>
</dbReference>